<evidence type="ECO:0000250" key="1">
    <source>
        <dbReference type="UniProtKB" id="P35318"/>
    </source>
</evidence>
<evidence type="ECO:0000250" key="2">
    <source>
        <dbReference type="UniProtKB" id="P43145"/>
    </source>
</evidence>
<evidence type="ECO:0000250" key="3">
    <source>
        <dbReference type="UniProtKB" id="P53366"/>
    </source>
</evidence>
<evidence type="ECO:0000256" key="4">
    <source>
        <dbReference type="SAM" id="MobiDB-lite"/>
    </source>
</evidence>
<evidence type="ECO:0000305" key="5"/>
<name>ADML_CANLF</name>
<protein>
    <recommendedName>
        <fullName>Pro-adrenomedullin</fullName>
    </recommendedName>
    <component>
        <recommendedName>
            <fullName evidence="1">Adrenomedullin</fullName>
            <shortName>AM</shortName>
        </recommendedName>
    </component>
    <component>
        <recommendedName>
            <fullName evidence="3">Proadrenomedullin N-20 terminal peptide</fullName>
        </recommendedName>
        <alternativeName>
            <fullName evidence="1">ProAM N-terminal 20 peptide</fullName>
            <shortName evidence="1">PAMP</shortName>
            <shortName>ProAM-N20</shortName>
        </alternativeName>
    </component>
</protein>
<organism>
    <name type="scientific">Canis lupus familiaris</name>
    <name type="common">Dog</name>
    <name type="synonym">Canis familiaris</name>
    <dbReference type="NCBI Taxonomy" id="9615"/>
    <lineage>
        <taxon>Eukaryota</taxon>
        <taxon>Metazoa</taxon>
        <taxon>Chordata</taxon>
        <taxon>Craniata</taxon>
        <taxon>Vertebrata</taxon>
        <taxon>Euteleostomi</taxon>
        <taxon>Mammalia</taxon>
        <taxon>Eutheria</taxon>
        <taxon>Laurasiatheria</taxon>
        <taxon>Carnivora</taxon>
        <taxon>Caniformia</taxon>
        <taxon>Canidae</taxon>
        <taxon>Canis</taxon>
    </lineage>
</organism>
<gene>
    <name type="primary">ADM</name>
</gene>
<sequence>MKLVPVALLYLGSLAFLGADTARLDVASEFRKKWNKWAVSRGKRELRVSSSYPTGLAEVKAGPAQTLIRTQDVKGASRNPQTSGPDAARIRVKRYRQSMNNFQGPRSFGCRFGTCTVQKLAHQIYQFTDNDKDGVAPRSKISPQGYGRRRRRSLPEPGLRRTLLFPEPRPGGAPAPRAHQVLANLLKM</sequence>
<feature type="signal peptide" evidence="3">
    <location>
        <begin position="1"/>
        <end position="21"/>
    </location>
</feature>
<feature type="peptide" id="PRO_0000000957" description="Proadrenomedullin N-20 terminal peptide" evidence="2">
    <location>
        <begin position="22"/>
        <end position="41"/>
    </location>
</feature>
<feature type="propeptide" id="PRO_0000000958" evidence="2">
    <location>
        <begin position="45"/>
        <end position="92"/>
    </location>
</feature>
<feature type="peptide" id="PRO_0000000959" description="Adrenomedullin" evidence="1">
    <location>
        <begin position="95"/>
        <end position="146"/>
    </location>
</feature>
<feature type="propeptide" id="PRO_0000000960" description="PreproAM C-terminal fragment" evidence="2">
    <location>
        <begin position="153"/>
        <end position="188"/>
    </location>
</feature>
<feature type="region of interest" description="Disordered" evidence="4">
    <location>
        <begin position="131"/>
        <end position="176"/>
    </location>
</feature>
<feature type="site" description="Required for CALCRL receptor interaction" evidence="1">
    <location>
        <position position="116"/>
    </location>
</feature>
<feature type="site" description="Required for CALCRL receptor interaction" evidence="1">
    <location>
        <position position="125"/>
    </location>
</feature>
<feature type="modified residue" description="Arginine amide" evidence="1">
    <location>
        <position position="41"/>
    </location>
</feature>
<feature type="modified residue" description="Tyrosine amide" evidence="1">
    <location>
        <position position="146"/>
    </location>
</feature>
<feature type="disulfide bond" evidence="1">
    <location>
        <begin position="110"/>
        <end position="115"/>
    </location>
</feature>
<feature type="sequence conflict" description="In Ref. 2; AAD09957." evidence="5" ref="2">
    <original>N</original>
    <variation>K</variation>
    <location>
        <position position="130"/>
    </location>
</feature>
<dbReference type="EMBL" id="AF045773">
    <property type="protein sequence ID" value="AAD05423.1"/>
    <property type="molecule type" value="mRNA"/>
</dbReference>
<dbReference type="EMBL" id="U96127">
    <property type="protein sequence ID" value="AAD09957.1"/>
    <property type="molecule type" value="mRNA"/>
</dbReference>
<dbReference type="EMBL" id="AB191461">
    <property type="protein sequence ID" value="BAD52304.1"/>
    <property type="molecule type" value="mRNA"/>
</dbReference>
<dbReference type="RefSeq" id="NP_001003183.1">
    <property type="nucleotide sequence ID" value="NM_001003183.1"/>
</dbReference>
<dbReference type="SMR" id="O77559"/>
<dbReference type="FunCoup" id="O77559">
    <property type="interactions" value="46"/>
</dbReference>
<dbReference type="STRING" id="9615.ENSCAFP00000011183"/>
<dbReference type="PaxDb" id="9612-ENSCAFP00000011183"/>
<dbReference type="GeneID" id="403817"/>
<dbReference type="KEGG" id="cfa:403817"/>
<dbReference type="CTD" id="133"/>
<dbReference type="eggNOG" id="ENOG502S4SF">
    <property type="taxonomic scope" value="Eukaryota"/>
</dbReference>
<dbReference type="InParanoid" id="O77559"/>
<dbReference type="OrthoDB" id="8771893at2759"/>
<dbReference type="TreeFam" id="TF333447"/>
<dbReference type="Proteomes" id="UP000002254">
    <property type="component" value="Unplaced"/>
</dbReference>
<dbReference type="Proteomes" id="UP000694429">
    <property type="component" value="Unplaced"/>
</dbReference>
<dbReference type="Proteomes" id="UP000694542">
    <property type="component" value="Unplaced"/>
</dbReference>
<dbReference type="Proteomes" id="UP000805418">
    <property type="component" value="Unplaced"/>
</dbReference>
<dbReference type="GO" id="GO:0005615">
    <property type="term" value="C:extracellular space"/>
    <property type="evidence" value="ECO:0000318"/>
    <property type="project" value="GO_Central"/>
</dbReference>
<dbReference type="GO" id="GO:0031700">
    <property type="term" value="F:adrenomedullin receptor binding"/>
    <property type="evidence" value="ECO:0000318"/>
    <property type="project" value="GO_Central"/>
</dbReference>
<dbReference type="GO" id="GO:0005179">
    <property type="term" value="F:hormone activity"/>
    <property type="evidence" value="ECO:0007669"/>
    <property type="project" value="UniProtKB-KW"/>
</dbReference>
<dbReference type="GO" id="GO:0007189">
    <property type="term" value="P:adenylate cyclase-activating G protein-coupled receptor signaling pathway"/>
    <property type="evidence" value="ECO:0000318"/>
    <property type="project" value="GO_Central"/>
</dbReference>
<dbReference type="GO" id="GO:1990410">
    <property type="term" value="P:adrenomedullin receptor signaling pathway"/>
    <property type="evidence" value="ECO:0000318"/>
    <property type="project" value="GO_Central"/>
</dbReference>
<dbReference type="GO" id="GO:0010460">
    <property type="term" value="P:positive regulation of heart rate"/>
    <property type="evidence" value="ECO:0000318"/>
    <property type="project" value="GO_Central"/>
</dbReference>
<dbReference type="GO" id="GO:0003073">
    <property type="term" value="P:regulation of systemic arterial blood pressure"/>
    <property type="evidence" value="ECO:0000318"/>
    <property type="project" value="GO_Central"/>
</dbReference>
<dbReference type="InterPro" id="IPR051665">
    <property type="entry name" value="Adrenomedullin-reg_peptide"/>
</dbReference>
<dbReference type="InterPro" id="IPR021116">
    <property type="entry name" value="Calcitonin/adrenomedullin"/>
</dbReference>
<dbReference type="InterPro" id="IPR001710">
    <property type="entry name" value="Pro-ADM"/>
</dbReference>
<dbReference type="PANTHER" id="PTHR23414">
    <property type="entry name" value="ADRENOMEDULLIN, ADM"/>
    <property type="match status" value="1"/>
</dbReference>
<dbReference type="PANTHER" id="PTHR23414:SF3">
    <property type="entry name" value="PRO-ADRENOMEDULLIN"/>
    <property type="match status" value="1"/>
</dbReference>
<dbReference type="Pfam" id="PF00214">
    <property type="entry name" value="Calc_CGRP_IAPP"/>
    <property type="match status" value="1"/>
</dbReference>
<dbReference type="PRINTS" id="PR00801">
    <property type="entry name" value="ADRENOMEDULN"/>
</dbReference>
<proteinExistence type="evidence at transcript level"/>
<keyword id="KW-0027">Amidation</keyword>
<keyword id="KW-0165">Cleavage on pair of basic residues</keyword>
<keyword id="KW-1015">Disulfide bond</keyword>
<keyword id="KW-0372">Hormone</keyword>
<keyword id="KW-1185">Reference proteome</keyword>
<keyword id="KW-0964">Secreted</keyword>
<keyword id="KW-0732">Signal</keyword>
<comment type="function">
    <text evidence="1">Adrenomedullin/ADM and proadrenomedullin N-20 terminal peptide/PAMP are peptide hormones that act as potent hypotensive and vasodilatator agents. Numerous actions have been reported most related to the physiologic control of fluid and electrolyte homeostasis.</text>
</comment>
<comment type="function">
    <molecule>Adrenomedullin</molecule>
    <text evidence="1">ADM function is mediated by the CALCRL-RAMP2 and CALCRL-RAMP3 receptor complexes with ADM showing the highest potency for the CALCRL-RAMP2 complex.</text>
</comment>
<comment type="subcellular location">
    <subcellularLocation>
        <location evidence="1">Secreted</location>
    </subcellularLocation>
</comment>
<comment type="similarity">
    <text evidence="5">Belongs to the adrenomedullin family.</text>
</comment>
<accession>O77559</accession>
<accession>Q9TVC9</accession>
<reference key="1">
    <citation type="submission" date="1999-01" db="EMBL/GenBank/DDBJ databases">
        <title>Cloning of cDNA encoding canine adrenomedullin.</title>
        <authorList>
            <person name="Imoto I."/>
            <person name="Jougasaki M."/>
        </authorList>
    </citation>
    <scope>NUCLEOTIDE SEQUENCE [MRNA]</scope>
</reference>
<reference key="2">
    <citation type="journal article" date="1998" name="Shock">
        <title>cDNA cloning of canine adrenomedullin and its gene expression in the heart and blood vessels in endotoxin shock.</title>
        <authorList>
            <person name="Ono Y."/>
            <person name="Kojima M."/>
            <person name="Okada K."/>
            <person name="Kangawa K."/>
        </authorList>
    </citation>
    <scope>NUCLEOTIDE SEQUENCE [MRNA]</scope>
</reference>
<reference key="3">
    <citation type="submission" date="2004-09" db="EMBL/GenBank/DDBJ databases">
        <title>Canis familiaris adrenomedullin mRNA, complete cds.</title>
        <authorList>
            <person name="Sasaki Y."/>
            <person name="Asano K."/>
        </authorList>
    </citation>
    <scope>NUCLEOTIDE SEQUENCE [MRNA]</scope>
</reference>